<keyword id="KW-0012">Acyltransferase</keyword>
<keyword id="KW-0153">Cholesterol metabolism</keyword>
<keyword id="KW-0256">Endoplasmic reticulum</keyword>
<keyword id="KW-0443">Lipid metabolism</keyword>
<keyword id="KW-0472">Membrane</keyword>
<keyword id="KW-0558">Oxidation</keyword>
<keyword id="KW-1185">Reference proteome</keyword>
<keyword id="KW-0753">Steroid metabolism</keyword>
<keyword id="KW-1207">Sterol metabolism</keyword>
<keyword id="KW-0882">Thioester bond</keyword>
<keyword id="KW-0808">Transferase</keyword>
<keyword id="KW-0812">Transmembrane</keyword>
<keyword id="KW-1133">Transmembrane helix</keyword>
<keyword id="KW-0832">Ubl conjugation</keyword>
<proteinExistence type="evidence at transcript level"/>
<protein>
    <recommendedName>
        <fullName evidence="6">Sterol O-acyltransferase 2</fullName>
        <ecNumber evidence="1">2.3.1.26</ecNumber>
    </recommendedName>
    <alternativeName>
        <fullName>Acyl-coenzyme A:cholesterol acyltransferase 2</fullName>
        <shortName>ACAT-2</shortName>
    </alternativeName>
    <alternativeName>
        <fullName>Cholesterol acyltransferase 2</fullName>
    </alternativeName>
</protein>
<dbReference type="EC" id="2.3.1.26" evidence="1"/>
<dbReference type="EMBL" id="AB101480">
    <property type="protein sequence ID" value="BAC78210.1"/>
    <property type="molecule type" value="mRNA"/>
</dbReference>
<dbReference type="RefSeq" id="NP_714950.2">
    <property type="nucleotide sequence ID" value="NM_153728.2"/>
</dbReference>
<dbReference type="SMR" id="Q7TQM4"/>
<dbReference type="FunCoup" id="Q7TQM4">
    <property type="interactions" value="57"/>
</dbReference>
<dbReference type="STRING" id="10116.ENSRNOP00000071253"/>
<dbReference type="BindingDB" id="Q7TQM4"/>
<dbReference type="ChEMBL" id="CHEMBL2856"/>
<dbReference type="CarbonylDB" id="Q7TQM4"/>
<dbReference type="PhosphoSitePlus" id="Q7TQM4"/>
<dbReference type="PaxDb" id="10116-ENSRNOP00000015367"/>
<dbReference type="GeneID" id="266770"/>
<dbReference type="KEGG" id="rno:266770"/>
<dbReference type="AGR" id="RGD:628865"/>
<dbReference type="CTD" id="8435"/>
<dbReference type="RGD" id="628865">
    <property type="gene designation" value="Soat2"/>
</dbReference>
<dbReference type="eggNOG" id="KOG0380">
    <property type="taxonomic scope" value="Eukaryota"/>
</dbReference>
<dbReference type="InParanoid" id="Q7TQM4"/>
<dbReference type="PhylomeDB" id="Q7TQM4"/>
<dbReference type="Reactome" id="R-RNO-8964038">
    <property type="pathway name" value="LDL clearance"/>
</dbReference>
<dbReference type="PRO" id="PR:Q7TQM4"/>
<dbReference type="Proteomes" id="UP000002494">
    <property type="component" value="Unplaced"/>
</dbReference>
<dbReference type="GO" id="GO:0005903">
    <property type="term" value="C:brush border"/>
    <property type="evidence" value="ECO:0000266"/>
    <property type="project" value="RGD"/>
</dbReference>
<dbReference type="GO" id="GO:0005783">
    <property type="term" value="C:endoplasmic reticulum"/>
    <property type="evidence" value="ECO:0000266"/>
    <property type="project" value="RGD"/>
</dbReference>
<dbReference type="GO" id="GO:0005789">
    <property type="term" value="C:endoplasmic reticulum membrane"/>
    <property type="evidence" value="ECO:0000266"/>
    <property type="project" value="RGD"/>
</dbReference>
<dbReference type="GO" id="GO:0016020">
    <property type="term" value="C:membrane"/>
    <property type="evidence" value="ECO:0000266"/>
    <property type="project" value="RGD"/>
</dbReference>
<dbReference type="GO" id="GO:0015485">
    <property type="term" value="F:cholesterol binding"/>
    <property type="evidence" value="ECO:0000266"/>
    <property type="project" value="RGD"/>
</dbReference>
<dbReference type="GO" id="GO:0034736">
    <property type="term" value="F:cholesterol O-acyltransferase activity"/>
    <property type="evidence" value="ECO:0000266"/>
    <property type="project" value="RGD"/>
</dbReference>
<dbReference type="GO" id="GO:0000062">
    <property type="term" value="F:fatty-acyl-CoA binding"/>
    <property type="evidence" value="ECO:0000266"/>
    <property type="project" value="RGD"/>
</dbReference>
<dbReference type="GO" id="GO:0004772">
    <property type="term" value="F:sterol O-acyltransferase activity"/>
    <property type="evidence" value="ECO:0000314"/>
    <property type="project" value="RGD"/>
</dbReference>
<dbReference type="GO" id="GO:0033344">
    <property type="term" value="P:cholesterol efflux"/>
    <property type="evidence" value="ECO:0000266"/>
    <property type="project" value="RGD"/>
</dbReference>
<dbReference type="GO" id="GO:0042632">
    <property type="term" value="P:cholesterol homeostasis"/>
    <property type="evidence" value="ECO:0007669"/>
    <property type="project" value="InterPro"/>
</dbReference>
<dbReference type="GO" id="GO:0008203">
    <property type="term" value="P:cholesterol metabolic process"/>
    <property type="evidence" value="ECO:0000314"/>
    <property type="project" value="RGD"/>
</dbReference>
<dbReference type="GO" id="GO:0010878">
    <property type="term" value="P:cholesterol storage"/>
    <property type="evidence" value="ECO:0000266"/>
    <property type="project" value="RGD"/>
</dbReference>
<dbReference type="GO" id="GO:0007584">
    <property type="term" value="P:response to nutrient"/>
    <property type="evidence" value="ECO:0000270"/>
    <property type="project" value="RGD"/>
</dbReference>
<dbReference type="GO" id="GO:0034379">
    <property type="term" value="P:very-low-density lipoprotein particle assembly"/>
    <property type="evidence" value="ECO:0000266"/>
    <property type="project" value="RGD"/>
</dbReference>
<dbReference type="InterPro" id="IPR004299">
    <property type="entry name" value="MBOAT_fam"/>
</dbReference>
<dbReference type="InterPro" id="IPR014371">
    <property type="entry name" value="Oat_ACAT_DAG_ARE"/>
</dbReference>
<dbReference type="InterPro" id="IPR030687">
    <property type="entry name" value="Sterol_acyltranf_meta"/>
</dbReference>
<dbReference type="PANTHER" id="PTHR10408">
    <property type="entry name" value="STEROL O-ACYLTRANSFERASE"/>
    <property type="match status" value="1"/>
</dbReference>
<dbReference type="PANTHER" id="PTHR10408:SF10">
    <property type="entry name" value="STEROL O-ACYLTRANSFERASE 2"/>
    <property type="match status" value="1"/>
</dbReference>
<dbReference type="Pfam" id="PF03062">
    <property type="entry name" value="MBOAT"/>
    <property type="match status" value="1"/>
</dbReference>
<dbReference type="PIRSF" id="PIRSF000439">
    <property type="entry name" value="Oat_ACAT_DAG_ARE"/>
    <property type="match status" value="1"/>
</dbReference>
<dbReference type="PIRSF" id="PIRSF500230">
    <property type="entry name" value="Sterol_acyltranf_ACAT"/>
    <property type="match status" value="1"/>
</dbReference>
<evidence type="ECO:0000250" key="1">
    <source>
        <dbReference type="UniProtKB" id="O75908"/>
    </source>
</evidence>
<evidence type="ECO:0000250" key="2">
    <source>
        <dbReference type="UniProtKB" id="O88908"/>
    </source>
</evidence>
<evidence type="ECO:0000250" key="3">
    <source>
        <dbReference type="UniProtKB" id="P35610"/>
    </source>
</evidence>
<evidence type="ECO:0000255" key="4"/>
<evidence type="ECO:0000256" key="5">
    <source>
        <dbReference type="SAM" id="MobiDB-lite"/>
    </source>
</evidence>
<evidence type="ECO:0000305" key="6"/>
<evidence type="ECO:0000312" key="7">
    <source>
        <dbReference type="RGD" id="628865"/>
    </source>
</evidence>
<feature type="chain" id="PRO_0000255713" description="Sterol O-acyltransferase 2">
    <location>
        <begin position="1"/>
        <end position="524"/>
    </location>
</feature>
<feature type="topological domain" description="Cytoplasmic" evidence="6">
    <location>
        <begin position="1"/>
        <end position="118"/>
    </location>
</feature>
<feature type="transmembrane region" description="Helical; Name=1" evidence="3">
    <location>
        <begin position="119"/>
        <end position="140"/>
    </location>
</feature>
<feature type="topological domain" description="Lumenal" evidence="6">
    <location>
        <begin position="141"/>
        <end position="160"/>
    </location>
</feature>
<feature type="transmembrane region" description="Helical; Name=2" evidence="3">
    <location>
        <begin position="161"/>
        <end position="186"/>
    </location>
</feature>
<feature type="topological domain" description="Cytoplasmic" evidence="6">
    <location>
        <begin position="187"/>
        <end position="198"/>
    </location>
</feature>
<feature type="transmembrane region" description="Helical; Name=3" evidence="3">
    <location>
        <begin position="199"/>
        <end position="222"/>
    </location>
</feature>
<feature type="topological domain" description="Lumenal" evidence="6">
    <location>
        <begin position="223"/>
        <end position="230"/>
    </location>
</feature>
<feature type="transmembrane region" description="Helical; Name=4" evidence="3">
    <location>
        <begin position="231"/>
        <end position="254"/>
    </location>
</feature>
<feature type="topological domain" description="Cytoplasmic" evidence="6">
    <location>
        <begin position="255"/>
        <end position="295"/>
    </location>
</feature>
<feature type="transmembrane region" description="Helical; Name=5" evidence="3">
    <location>
        <begin position="296"/>
        <end position="328"/>
    </location>
</feature>
<feature type="topological domain" description="Lumenal" evidence="6">
    <location>
        <begin position="329"/>
        <end position="345"/>
    </location>
</feature>
<feature type="transmembrane region" description="Helical; Name=6" evidence="3">
    <location>
        <begin position="346"/>
        <end position="371"/>
    </location>
</feature>
<feature type="topological domain" description="Cytoplasmic" evidence="6">
    <location>
        <begin position="372"/>
        <end position="419"/>
    </location>
</feature>
<feature type="transmembrane region" description="Helical; Name=7" evidence="3">
    <location>
        <begin position="420"/>
        <end position="444"/>
    </location>
</feature>
<feature type="topological domain" description="Lumenal" evidence="6">
    <location>
        <begin position="445"/>
        <end position="450"/>
    </location>
</feature>
<feature type="transmembrane region" description="Helical; Name=8" evidence="3">
    <location>
        <begin position="451"/>
        <end position="466"/>
    </location>
</feature>
<feature type="topological domain" description="Cytoplasmic" evidence="6">
    <location>
        <begin position="467"/>
        <end position="472"/>
    </location>
</feature>
<feature type="transmembrane region" description="Helical; Name=9" evidence="3">
    <location>
        <begin position="473"/>
        <end position="504"/>
    </location>
</feature>
<feature type="topological domain" description="Lumenal" evidence="6">
    <location>
        <begin position="505"/>
        <end position="524"/>
    </location>
</feature>
<feature type="region of interest" description="Disordered" evidence="5">
    <location>
        <begin position="1"/>
        <end position="31"/>
    </location>
</feature>
<feature type="short sequence motif" description="FYXDWWN motif" evidence="3">
    <location>
        <begin position="379"/>
        <end position="385"/>
    </location>
</feature>
<feature type="active site" evidence="3">
    <location>
        <position position="436"/>
    </location>
</feature>
<feature type="binding site" evidence="3">
    <location>
        <position position="117"/>
    </location>
    <ligand>
        <name>cholesterol</name>
        <dbReference type="ChEBI" id="CHEBI:16113"/>
    </ligand>
</feature>
<feature type="binding site" evidence="3">
    <location>
        <position position="391"/>
    </location>
    <ligand>
        <name>an acyl-CoA</name>
        <dbReference type="ChEBI" id="CHEBI:58342"/>
    </ligand>
</feature>
<feature type="binding site" evidence="3">
    <location>
        <position position="394"/>
    </location>
    <ligand>
        <name>an acyl-CoA</name>
        <dbReference type="ChEBI" id="CHEBI:58342"/>
    </ligand>
</feature>
<feature type="binding site" evidence="3">
    <location>
        <position position="397"/>
    </location>
    <ligand>
        <name>an acyl-CoA</name>
        <dbReference type="ChEBI" id="CHEBI:58342"/>
    </ligand>
</feature>
<feature type="binding site" evidence="3">
    <location>
        <position position="401"/>
    </location>
    <ligand>
        <name>an acyl-CoA</name>
        <dbReference type="ChEBI" id="CHEBI:58342"/>
    </ligand>
</feature>
<feature type="binding site" evidence="3">
    <location>
        <position position="409"/>
    </location>
    <ligand>
        <name>an acyl-CoA</name>
        <dbReference type="ChEBI" id="CHEBI:58342"/>
    </ligand>
</feature>
<feature type="binding site" evidence="3">
    <location>
        <position position="432"/>
    </location>
    <ligand>
        <name>an acyl-CoA</name>
        <dbReference type="ChEBI" id="CHEBI:58342"/>
    </ligand>
</feature>
<feature type="modified residue" description="Cysteine sulfenic acid (-SOH); alternate" evidence="1">
    <location>
        <position position="279"/>
    </location>
</feature>
<feature type="cross-link" description="Glycyl cysteine thioester (Cys-Gly) (interchain with G-Cter in ubiquitin); alternate" evidence="1">
    <location>
        <position position="279"/>
    </location>
</feature>
<gene>
    <name evidence="7" type="primary">Soat2</name>
    <name type="synonym">Acat2</name>
</gene>
<name>SOAT2_RAT</name>
<accession>Q7TQM4</accession>
<reference key="1">
    <citation type="submission" date="2003-01" db="EMBL/GenBank/DDBJ databases">
        <title>Acyl-coenzyme A:cholesterol acyltransferase 2 is responsible for elevated intestinal cholesterol ester formation in streptozotocin-induced diabetic rats.</title>
        <authorList>
            <person name="Horiuchi S."/>
            <person name="Hori M."/>
            <person name="Hakamata H."/>
            <person name="Sato M."/>
            <person name="Miyazaki A."/>
        </authorList>
    </citation>
    <scope>NUCLEOTIDE SEQUENCE [MRNA]</scope>
    <source>
        <strain>Sprague-Dawley</strain>
        <tissue>Liver</tissue>
    </source>
</reference>
<comment type="function">
    <text evidence="1">Catalyzes the formation of fatty acid-cholesterol esters, which are less soluble in membranes than cholesterol. Plays a role in lipoprotein assembly and dietary cholesterol absorption. Utilizes oleoyl-CoA ((9Z)-octadecenoyl-CoA) and linolenoyl-CoA ((9Z,12Z,15Z)-octadecatrienoyl-CoA) as substrates. May provide cholesteryl esters for lipoprotein secretion from hepatocytes and intestinal mucosa.</text>
</comment>
<comment type="catalytic activity">
    <reaction evidence="1">
        <text>a sterol + a long-chain fatty acyl-CoA = a long-chain 3-hydroxysterol ester + CoA</text>
        <dbReference type="Rhea" id="RHEA:59816"/>
        <dbReference type="ChEBI" id="CHEBI:15889"/>
        <dbReference type="ChEBI" id="CHEBI:57287"/>
        <dbReference type="ChEBI" id="CHEBI:83139"/>
        <dbReference type="ChEBI" id="CHEBI:232093"/>
        <dbReference type="EC" id="2.3.1.26"/>
    </reaction>
    <physiologicalReaction direction="left-to-right" evidence="1">
        <dbReference type="Rhea" id="RHEA:59817"/>
    </physiologicalReaction>
</comment>
<comment type="catalytic activity">
    <reaction evidence="1">
        <text>cholesterol + an acyl-CoA = a cholesterol ester + CoA</text>
        <dbReference type="Rhea" id="RHEA:17729"/>
        <dbReference type="ChEBI" id="CHEBI:16113"/>
        <dbReference type="ChEBI" id="CHEBI:17002"/>
        <dbReference type="ChEBI" id="CHEBI:57287"/>
        <dbReference type="ChEBI" id="CHEBI:58342"/>
    </reaction>
    <physiologicalReaction direction="left-to-right" evidence="1">
        <dbReference type="Rhea" id="RHEA:17730"/>
    </physiologicalReaction>
</comment>
<comment type="catalytic activity">
    <reaction evidence="1">
        <text>cholesterol + (9Z)-octadecenoyl-CoA = cholesteryl (9Z-octadecenoate) + CoA</text>
        <dbReference type="Rhea" id="RHEA:41436"/>
        <dbReference type="ChEBI" id="CHEBI:16113"/>
        <dbReference type="ChEBI" id="CHEBI:46898"/>
        <dbReference type="ChEBI" id="CHEBI:57287"/>
        <dbReference type="ChEBI" id="CHEBI:57387"/>
    </reaction>
    <physiologicalReaction direction="left-to-right" evidence="1">
        <dbReference type="Rhea" id="RHEA:41437"/>
    </physiologicalReaction>
</comment>
<comment type="catalytic activity">
    <reaction evidence="1">
        <text>(5Z,8Z,11Z,14Z,17Z)-eicosapentaenoyl-CoA + cholesterol = (5Z,8Z,11Z,14Z,17Z-eicosapentaenoyl)-cholesterol + CoA</text>
        <dbReference type="Rhea" id="RHEA:46612"/>
        <dbReference type="ChEBI" id="CHEBI:16113"/>
        <dbReference type="ChEBI" id="CHEBI:57287"/>
        <dbReference type="ChEBI" id="CHEBI:73862"/>
        <dbReference type="ChEBI" id="CHEBI:84969"/>
    </reaction>
    <physiologicalReaction direction="left-to-right" evidence="1">
        <dbReference type="Rhea" id="RHEA:46613"/>
    </physiologicalReaction>
</comment>
<comment type="catalytic activity">
    <reaction evidence="1">
        <text>(9Z,12Z,15Z)-octadecatrienoyl-CoA + cholesterol = (9Z,12Z,15Z-octadecatrienoyl)-cholesterol + CoA</text>
        <dbReference type="Rhea" id="RHEA:46620"/>
        <dbReference type="ChEBI" id="CHEBI:16113"/>
        <dbReference type="ChEBI" id="CHEBI:57287"/>
        <dbReference type="ChEBI" id="CHEBI:74034"/>
        <dbReference type="ChEBI" id="CHEBI:84341"/>
    </reaction>
    <physiologicalReaction direction="left-to-right" evidence="1">
        <dbReference type="Rhea" id="RHEA:46621"/>
    </physiologicalReaction>
</comment>
<comment type="catalytic activity">
    <reaction evidence="1">
        <text>(5Z,8Z,11Z,14Z)-eicosatetraenoyl-CoA + cholesterol = cholesteryl (5Z,8Z,11Z,14Z)-eicosatetraenoate + CoA</text>
        <dbReference type="Rhea" id="RHEA:42816"/>
        <dbReference type="ChEBI" id="CHEBI:16113"/>
        <dbReference type="ChEBI" id="CHEBI:57287"/>
        <dbReference type="ChEBI" id="CHEBI:57368"/>
        <dbReference type="ChEBI" id="CHEBI:82751"/>
    </reaction>
    <physiologicalReaction direction="left-to-right" evidence="1">
        <dbReference type="Rhea" id="RHEA:42817"/>
    </physiologicalReaction>
</comment>
<comment type="subunit">
    <text evidence="1 3">May form homo- or heterodimers (By similarity). Interacts with INSIG1; the interaction is direct and promotes association with AMFR/gp78 (By similarity).</text>
</comment>
<comment type="subcellular location">
    <subcellularLocation>
        <location evidence="2">Endoplasmic reticulum membrane</location>
        <topology evidence="4">Multi-pass membrane protein</topology>
    </subcellularLocation>
</comment>
<comment type="domain">
    <text evidence="3">Each protomer consists of 9 transmembrane segments, which enclose a cytosolic tunnel and a transmembrane tunnel that converge at the predicted catalytic site: acyl-CoA enters the active site through the cytosolic tunnel, whereas cholesterol enters from the side through the transmembrane tunnel.</text>
</comment>
<comment type="PTM">
    <text evidence="1">Polyubiquitinated by AMFR/gp78 at Cys-279, leading to its degradation when the lipid levels are low. Association with AMFR/gp78 is mediated via interaction with INSIG1. High concentration of cholesterol and fatty acid results in Cys-279 oxidation, preventing ubiquitination at the same site, resulting in protein stabilization.</text>
</comment>
<comment type="PTM">
    <text evidence="1">Oxidized at Cys-279: high concentration of cholesterol and fatty acid induce reactive oxygen species, which oxidizes Cys-279, preventing ubiquitination at the same site, and resulting in protein stabilization.</text>
</comment>
<comment type="similarity">
    <text evidence="6">Belongs to the membrane-bound acyltransferase family. Sterol o-acyltransferase subfamily.</text>
</comment>
<organism>
    <name type="scientific">Rattus norvegicus</name>
    <name type="common">Rat</name>
    <dbReference type="NCBI Taxonomy" id="10116"/>
    <lineage>
        <taxon>Eukaryota</taxon>
        <taxon>Metazoa</taxon>
        <taxon>Chordata</taxon>
        <taxon>Craniata</taxon>
        <taxon>Vertebrata</taxon>
        <taxon>Euteleostomi</taxon>
        <taxon>Mammalia</taxon>
        <taxon>Eutheria</taxon>
        <taxon>Euarchontoglires</taxon>
        <taxon>Glires</taxon>
        <taxon>Rodentia</taxon>
        <taxon>Myomorpha</taxon>
        <taxon>Muroidea</taxon>
        <taxon>Muridae</taxon>
        <taxon>Murinae</taxon>
        <taxon>Rattus</taxon>
    </lineage>
</organism>
<sequence>MEPKAPQLRRRERQGEEQENGACGEGNTRTHRAPDLVQWTRHMEAVKTQCLEQAQRELAELMDRAIWEAVQAYPKQDRPLPSTASDSTRKTQELHPGKRKVFITRKSLLDELMGVQHFRTIYHMFIAGLCVLIISTLAIDFIDEGRLMLEFDLLLFSFGQLPLALMMWVPMFLSTLLLPYQTLRLWARPRSGGAWTLGASLGCVLLAAHAAVLCVLPVHVSVKHELPPASRCVLVFEQVRFLMKSYSFLRETVPGIFCVRGGKGICTPSFSSYLYFLFCPTLIYRETYPRTPSIRWNYVAKNFAQALGCLLYACFILGRLCVPVFANMSREPFSTRALLLSILHATGPGIFMLLLIFFAFLHCWLNAFAEMLRFGDRMFYRDWWNSTSFSNYYRTWNVVVHDWLYSYVYQDGLWLLGRQGRGAAMLGVFLVSALVHEYIFCFVLGFFYPVMLILFLVVGGLLNFTMNDRHTGPAWNILMWTFLFLGQGIQVSLYCQEWYARRHCPLPQPTFWELVTPRSWSCHP</sequence>